<name>SYM_PARXL</name>
<dbReference type="EC" id="6.1.1.10" evidence="1"/>
<dbReference type="EMBL" id="CP000270">
    <property type="protein sequence ID" value="ABE29502.1"/>
    <property type="molecule type" value="Genomic_DNA"/>
</dbReference>
<dbReference type="RefSeq" id="WP_011487259.1">
    <property type="nucleotide sequence ID" value="NC_007951.1"/>
</dbReference>
<dbReference type="SMR" id="Q143I7"/>
<dbReference type="STRING" id="266265.Bxe_A3483"/>
<dbReference type="KEGG" id="bxb:DR64_1186"/>
<dbReference type="KEGG" id="bxe:Bxe_A3483"/>
<dbReference type="PATRIC" id="fig|266265.5.peg.984"/>
<dbReference type="eggNOG" id="COG0073">
    <property type="taxonomic scope" value="Bacteria"/>
</dbReference>
<dbReference type="eggNOG" id="COG0143">
    <property type="taxonomic scope" value="Bacteria"/>
</dbReference>
<dbReference type="OrthoDB" id="9810191at2"/>
<dbReference type="Proteomes" id="UP000001817">
    <property type="component" value="Chromosome 1"/>
</dbReference>
<dbReference type="GO" id="GO:0005829">
    <property type="term" value="C:cytosol"/>
    <property type="evidence" value="ECO:0007669"/>
    <property type="project" value="TreeGrafter"/>
</dbReference>
<dbReference type="GO" id="GO:0005524">
    <property type="term" value="F:ATP binding"/>
    <property type="evidence" value="ECO:0007669"/>
    <property type="project" value="UniProtKB-UniRule"/>
</dbReference>
<dbReference type="GO" id="GO:0046872">
    <property type="term" value="F:metal ion binding"/>
    <property type="evidence" value="ECO:0007669"/>
    <property type="project" value="UniProtKB-KW"/>
</dbReference>
<dbReference type="GO" id="GO:0004825">
    <property type="term" value="F:methionine-tRNA ligase activity"/>
    <property type="evidence" value="ECO:0007669"/>
    <property type="project" value="UniProtKB-UniRule"/>
</dbReference>
<dbReference type="GO" id="GO:0000049">
    <property type="term" value="F:tRNA binding"/>
    <property type="evidence" value="ECO:0007669"/>
    <property type="project" value="UniProtKB-KW"/>
</dbReference>
<dbReference type="GO" id="GO:0006431">
    <property type="term" value="P:methionyl-tRNA aminoacylation"/>
    <property type="evidence" value="ECO:0007669"/>
    <property type="project" value="UniProtKB-UniRule"/>
</dbReference>
<dbReference type="CDD" id="cd07957">
    <property type="entry name" value="Anticodon_Ia_Met"/>
    <property type="match status" value="1"/>
</dbReference>
<dbReference type="CDD" id="cd00814">
    <property type="entry name" value="MetRS_core"/>
    <property type="match status" value="1"/>
</dbReference>
<dbReference type="CDD" id="cd02800">
    <property type="entry name" value="tRNA_bind_EcMetRS_like"/>
    <property type="match status" value="1"/>
</dbReference>
<dbReference type="FunFam" id="2.20.28.20:FF:000001">
    <property type="entry name" value="Methionine--tRNA ligase"/>
    <property type="match status" value="1"/>
</dbReference>
<dbReference type="FunFam" id="2.40.50.140:FF:000042">
    <property type="entry name" value="Methionine--tRNA ligase"/>
    <property type="match status" value="1"/>
</dbReference>
<dbReference type="Gene3D" id="3.40.50.620">
    <property type="entry name" value="HUPs"/>
    <property type="match status" value="1"/>
</dbReference>
<dbReference type="Gene3D" id="1.10.730.10">
    <property type="entry name" value="Isoleucyl-tRNA Synthetase, Domain 1"/>
    <property type="match status" value="1"/>
</dbReference>
<dbReference type="Gene3D" id="2.20.28.20">
    <property type="entry name" value="Methionyl-tRNA synthetase, Zn-domain"/>
    <property type="match status" value="1"/>
</dbReference>
<dbReference type="Gene3D" id="2.40.50.140">
    <property type="entry name" value="Nucleic acid-binding proteins"/>
    <property type="match status" value="1"/>
</dbReference>
<dbReference type="HAMAP" id="MF_00098">
    <property type="entry name" value="Met_tRNA_synth_type1"/>
    <property type="match status" value="1"/>
</dbReference>
<dbReference type="InterPro" id="IPR001412">
    <property type="entry name" value="aa-tRNA-synth_I_CS"/>
</dbReference>
<dbReference type="InterPro" id="IPR041872">
    <property type="entry name" value="Anticodon_Met"/>
</dbReference>
<dbReference type="InterPro" id="IPR013155">
    <property type="entry name" value="M/V/L/I-tRNA-synth_anticd-bd"/>
</dbReference>
<dbReference type="InterPro" id="IPR004495">
    <property type="entry name" value="Met-tRNA-synth_bsu_C"/>
</dbReference>
<dbReference type="InterPro" id="IPR023458">
    <property type="entry name" value="Met-tRNA_ligase_1"/>
</dbReference>
<dbReference type="InterPro" id="IPR014758">
    <property type="entry name" value="Met-tRNA_synth"/>
</dbReference>
<dbReference type="InterPro" id="IPR015413">
    <property type="entry name" value="Methionyl/Leucyl_tRNA_Synth"/>
</dbReference>
<dbReference type="InterPro" id="IPR033911">
    <property type="entry name" value="MetRS_core"/>
</dbReference>
<dbReference type="InterPro" id="IPR029038">
    <property type="entry name" value="MetRS_Zn"/>
</dbReference>
<dbReference type="InterPro" id="IPR012340">
    <property type="entry name" value="NA-bd_OB-fold"/>
</dbReference>
<dbReference type="InterPro" id="IPR014729">
    <property type="entry name" value="Rossmann-like_a/b/a_fold"/>
</dbReference>
<dbReference type="InterPro" id="IPR002547">
    <property type="entry name" value="tRNA-bd_dom"/>
</dbReference>
<dbReference type="InterPro" id="IPR009080">
    <property type="entry name" value="tRNAsynth_Ia_anticodon-bd"/>
</dbReference>
<dbReference type="NCBIfam" id="TIGR00398">
    <property type="entry name" value="metG"/>
    <property type="match status" value="1"/>
</dbReference>
<dbReference type="NCBIfam" id="TIGR00399">
    <property type="entry name" value="metG_C_term"/>
    <property type="match status" value="1"/>
</dbReference>
<dbReference type="NCBIfam" id="NF001100">
    <property type="entry name" value="PRK00133.1"/>
    <property type="match status" value="1"/>
</dbReference>
<dbReference type="PANTHER" id="PTHR45765">
    <property type="entry name" value="METHIONINE--TRNA LIGASE"/>
    <property type="match status" value="1"/>
</dbReference>
<dbReference type="PANTHER" id="PTHR45765:SF1">
    <property type="entry name" value="METHIONINE--TRNA LIGASE, CYTOPLASMIC"/>
    <property type="match status" value="1"/>
</dbReference>
<dbReference type="Pfam" id="PF08264">
    <property type="entry name" value="Anticodon_1"/>
    <property type="match status" value="1"/>
</dbReference>
<dbReference type="Pfam" id="PF09334">
    <property type="entry name" value="tRNA-synt_1g"/>
    <property type="match status" value="1"/>
</dbReference>
<dbReference type="Pfam" id="PF01588">
    <property type="entry name" value="tRNA_bind"/>
    <property type="match status" value="1"/>
</dbReference>
<dbReference type="PRINTS" id="PR01041">
    <property type="entry name" value="TRNASYNTHMET"/>
</dbReference>
<dbReference type="SUPFAM" id="SSF47323">
    <property type="entry name" value="Anticodon-binding domain of a subclass of class I aminoacyl-tRNA synthetases"/>
    <property type="match status" value="1"/>
</dbReference>
<dbReference type="SUPFAM" id="SSF57770">
    <property type="entry name" value="Methionyl-tRNA synthetase (MetRS), Zn-domain"/>
    <property type="match status" value="1"/>
</dbReference>
<dbReference type="SUPFAM" id="SSF50249">
    <property type="entry name" value="Nucleic acid-binding proteins"/>
    <property type="match status" value="1"/>
</dbReference>
<dbReference type="SUPFAM" id="SSF52374">
    <property type="entry name" value="Nucleotidylyl transferase"/>
    <property type="match status" value="1"/>
</dbReference>
<dbReference type="PROSITE" id="PS00178">
    <property type="entry name" value="AA_TRNA_LIGASE_I"/>
    <property type="match status" value="1"/>
</dbReference>
<dbReference type="PROSITE" id="PS50886">
    <property type="entry name" value="TRBD"/>
    <property type="match status" value="1"/>
</dbReference>
<keyword id="KW-0030">Aminoacyl-tRNA synthetase</keyword>
<keyword id="KW-0067">ATP-binding</keyword>
<keyword id="KW-0963">Cytoplasm</keyword>
<keyword id="KW-0436">Ligase</keyword>
<keyword id="KW-0479">Metal-binding</keyword>
<keyword id="KW-0547">Nucleotide-binding</keyword>
<keyword id="KW-0648">Protein biosynthesis</keyword>
<keyword id="KW-1185">Reference proteome</keyword>
<keyword id="KW-0694">RNA-binding</keyword>
<keyword id="KW-0820">tRNA-binding</keyword>
<keyword id="KW-0862">Zinc</keyword>
<gene>
    <name evidence="1" type="primary">metG</name>
    <name type="ordered locus">Bxeno_A0964</name>
    <name type="ORF">Bxe_A3483</name>
</gene>
<proteinExistence type="inferred from homology"/>
<feature type="chain" id="PRO_0000331799" description="Methionine--tRNA ligase">
    <location>
        <begin position="1"/>
        <end position="710"/>
    </location>
</feature>
<feature type="domain" description="tRNA-binding" evidence="1">
    <location>
        <begin position="604"/>
        <end position="710"/>
    </location>
</feature>
<feature type="short sequence motif" description="'HIGH' region">
    <location>
        <begin position="26"/>
        <end position="36"/>
    </location>
</feature>
<feature type="short sequence motif" description="'KMSKS' region">
    <location>
        <begin position="347"/>
        <end position="351"/>
    </location>
</feature>
<feature type="binding site" evidence="1">
    <location>
        <position position="157"/>
    </location>
    <ligand>
        <name>Zn(2+)</name>
        <dbReference type="ChEBI" id="CHEBI:29105"/>
    </ligand>
</feature>
<feature type="binding site" evidence="1">
    <location>
        <position position="160"/>
    </location>
    <ligand>
        <name>Zn(2+)</name>
        <dbReference type="ChEBI" id="CHEBI:29105"/>
    </ligand>
</feature>
<feature type="binding site" evidence="1">
    <location>
        <position position="170"/>
    </location>
    <ligand>
        <name>Zn(2+)</name>
        <dbReference type="ChEBI" id="CHEBI:29105"/>
    </ligand>
</feature>
<feature type="binding site" evidence="1">
    <location>
        <position position="173"/>
    </location>
    <ligand>
        <name>Zn(2+)</name>
        <dbReference type="ChEBI" id="CHEBI:29105"/>
    </ligand>
</feature>
<feature type="binding site" evidence="1">
    <location>
        <position position="350"/>
    </location>
    <ligand>
        <name>ATP</name>
        <dbReference type="ChEBI" id="CHEBI:30616"/>
    </ligand>
</feature>
<evidence type="ECO:0000255" key="1">
    <source>
        <dbReference type="HAMAP-Rule" id="MF_00098"/>
    </source>
</evidence>
<reference key="1">
    <citation type="journal article" date="2006" name="Proc. Natl. Acad. Sci. U.S.A.">
        <title>Burkholderia xenovorans LB400 harbors a multi-replicon, 9.73-Mbp genome shaped for versatility.</title>
        <authorList>
            <person name="Chain P.S.G."/>
            <person name="Denef V.J."/>
            <person name="Konstantinidis K.T."/>
            <person name="Vergez L.M."/>
            <person name="Agullo L."/>
            <person name="Reyes V.L."/>
            <person name="Hauser L."/>
            <person name="Cordova M."/>
            <person name="Gomez L."/>
            <person name="Gonzalez M."/>
            <person name="Land M."/>
            <person name="Lao V."/>
            <person name="Larimer F."/>
            <person name="LiPuma J.J."/>
            <person name="Mahenthiralingam E."/>
            <person name="Malfatti S.A."/>
            <person name="Marx C.J."/>
            <person name="Parnell J.J."/>
            <person name="Ramette A."/>
            <person name="Richardson P."/>
            <person name="Seeger M."/>
            <person name="Smith D."/>
            <person name="Spilker T."/>
            <person name="Sul W.J."/>
            <person name="Tsoi T.V."/>
            <person name="Ulrich L.E."/>
            <person name="Zhulin I.B."/>
            <person name="Tiedje J.M."/>
        </authorList>
    </citation>
    <scope>NUCLEOTIDE SEQUENCE [LARGE SCALE GENOMIC DNA]</scope>
    <source>
        <strain>LB400</strain>
    </source>
</reference>
<sequence length="710" mass="78509">MSAPATDLSAGAPSGRRQILVTSALPYANGQIHIGHLVEYIQTDIWVRTLRMHGHEVYYVGADDTHGTPVMLRAEKEGLTPKQLIDRVWQEHKRDFDSFGISFDNYYSTDSEENRVLSENVYLALKEAGLIDARDIEQAYDPVKEMFLPDRFIKGECPKCGAKDQYGDSCEVCGSTYLPTELINPYSVVSGATPVRKTSTHYFFRLSDPRCENFLRAWVGGLAQPEATNKMREWLGDAGEAKLADWDISRDAPYFGFEIPGAPGKYFYVWLDAPVGYYASFKNLAEKRGLDFDAWVRKGSKAEQYHFIGKDILYFHTLFWPAMLEFSGHRTPTNVFAHGFLTVDGAKMSKSRGTFITAQSVIETGLNPEWLRYYFAAKLNSTMEDLDLNLDDFQARVNSDLVGKYVNIASRAAGFLIKRFDGRVQDSAMQHPLLASLRAAVPQIAANYEAREYNRALRQTMELADAVNAYVDTAKPWDQAKDPANGVALHETCSVSIEAFRLLSLALKPVLPKLAEAVEGFLAIQPLVWADANVPLSSTRPINAYKHLMTRVDPKQIEALLAANRDSLQATPEAAAPADAKGKSKAAKAAAGKDETPGIISIDDFAKIDLRIAKIVDCKAVEGSDKLLQLTLDVGEEKTRNVFSGIKSAYQPEQLVGKLTVMVANLAPRKMKFGLSEGMVLAASATDEKAEPGLYVLEPDSGAKPGMRVK</sequence>
<organism>
    <name type="scientific">Paraburkholderia xenovorans (strain LB400)</name>
    <dbReference type="NCBI Taxonomy" id="266265"/>
    <lineage>
        <taxon>Bacteria</taxon>
        <taxon>Pseudomonadati</taxon>
        <taxon>Pseudomonadota</taxon>
        <taxon>Betaproteobacteria</taxon>
        <taxon>Burkholderiales</taxon>
        <taxon>Burkholderiaceae</taxon>
        <taxon>Paraburkholderia</taxon>
    </lineage>
</organism>
<protein>
    <recommendedName>
        <fullName evidence="1">Methionine--tRNA ligase</fullName>
        <ecNumber evidence="1">6.1.1.10</ecNumber>
    </recommendedName>
    <alternativeName>
        <fullName evidence="1">Methionyl-tRNA synthetase</fullName>
        <shortName evidence="1">MetRS</shortName>
    </alternativeName>
</protein>
<accession>Q143I7</accession>
<comment type="function">
    <text evidence="1">Is required not only for elongation of protein synthesis but also for the initiation of all mRNA translation through initiator tRNA(fMet) aminoacylation.</text>
</comment>
<comment type="catalytic activity">
    <reaction evidence="1">
        <text>tRNA(Met) + L-methionine + ATP = L-methionyl-tRNA(Met) + AMP + diphosphate</text>
        <dbReference type="Rhea" id="RHEA:13481"/>
        <dbReference type="Rhea" id="RHEA-COMP:9667"/>
        <dbReference type="Rhea" id="RHEA-COMP:9698"/>
        <dbReference type="ChEBI" id="CHEBI:30616"/>
        <dbReference type="ChEBI" id="CHEBI:33019"/>
        <dbReference type="ChEBI" id="CHEBI:57844"/>
        <dbReference type="ChEBI" id="CHEBI:78442"/>
        <dbReference type="ChEBI" id="CHEBI:78530"/>
        <dbReference type="ChEBI" id="CHEBI:456215"/>
        <dbReference type="EC" id="6.1.1.10"/>
    </reaction>
</comment>
<comment type="cofactor">
    <cofactor evidence="1">
        <name>Zn(2+)</name>
        <dbReference type="ChEBI" id="CHEBI:29105"/>
    </cofactor>
    <text evidence="1">Binds 1 zinc ion per subunit.</text>
</comment>
<comment type="subunit">
    <text evidence="1">Homodimer.</text>
</comment>
<comment type="subcellular location">
    <subcellularLocation>
        <location evidence="1">Cytoplasm</location>
    </subcellularLocation>
</comment>
<comment type="similarity">
    <text evidence="1">Belongs to the class-I aminoacyl-tRNA synthetase family. MetG type 1 subfamily.</text>
</comment>